<protein>
    <recommendedName>
        <fullName evidence="3">Aconitate hydratase A</fullName>
        <shortName evidence="3">ACN</shortName>
        <shortName evidence="3">Aconitase</shortName>
        <ecNumber evidence="3">4.2.1.3</ecNumber>
    </recommendedName>
    <alternativeName>
        <fullName evidence="3">(2R,3S)-2-methylisocitrate dehydratase</fullName>
    </alternativeName>
    <alternativeName>
        <fullName evidence="3">(2S,3R)-3-hydroxybutane-1,2,3-tricarboxylate dehydratase</fullName>
    </alternativeName>
    <alternativeName>
        <fullName evidence="1">Iron-responsive protein-like</fullName>
        <shortName evidence="1">IRP-like</shortName>
    </alternativeName>
    <alternativeName>
        <fullName evidence="3">Probable 2-methyl-cis-aconitate hydratase</fullName>
        <ecNumber evidence="3">4.2.1.99</ecNumber>
    </alternativeName>
    <alternativeName>
        <fullName evidence="1">RNA-binding protein</fullName>
    </alternativeName>
</protein>
<name>ACNA_STAES</name>
<keyword id="KW-0408">Iron</keyword>
<keyword id="KW-0411">Iron-sulfur</keyword>
<keyword id="KW-0456">Lyase</keyword>
<keyword id="KW-0479">Metal-binding</keyword>
<keyword id="KW-0694">RNA-binding</keyword>
<keyword id="KW-0816">Tricarboxylic acid cycle</keyword>
<gene>
    <name type="primary">acnA</name>
    <name type="synonym">citB</name>
    <name type="ordered locus">SE_1032</name>
</gene>
<dbReference type="EC" id="4.2.1.3" evidence="3"/>
<dbReference type="EC" id="4.2.1.99" evidence="3"/>
<dbReference type="EMBL" id="AE015929">
    <property type="protein sequence ID" value="AAO04629.1"/>
    <property type="molecule type" value="Genomic_DNA"/>
</dbReference>
<dbReference type="RefSeq" id="NP_764587.1">
    <property type="nucleotide sequence ID" value="NC_004461.1"/>
</dbReference>
<dbReference type="RefSeq" id="WP_002456207.1">
    <property type="nucleotide sequence ID" value="NZ_WBME01000040.1"/>
</dbReference>
<dbReference type="SMR" id="Q8CPC2"/>
<dbReference type="KEGG" id="sep:SE_1032"/>
<dbReference type="PATRIC" id="fig|176280.10.peg.1007"/>
<dbReference type="eggNOG" id="COG1048">
    <property type="taxonomic scope" value="Bacteria"/>
</dbReference>
<dbReference type="HOGENOM" id="CLU_013476_2_1_9"/>
<dbReference type="OrthoDB" id="9764318at2"/>
<dbReference type="UniPathway" id="UPA00223">
    <property type="reaction ID" value="UER00718"/>
</dbReference>
<dbReference type="UniPathway" id="UPA00946"/>
<dbReference type="Proteomes" id="UP000001411">
    <property type="component" value="Chromosome"/>
</dbReference>
<dbReference type="GO" id="GO:0047456">
    <property type="term" value="F:2-methylisocitrate dehydratase activity"/>
    <property type="evidence" value="ECO:0000250"/>
    <property type="project" value="UniProtKB"/>
</dbReference>
<dbReference type="GO" id="GO:0051539">
    <property type="term" value="F:4 iron, 4 sulfur cluster binding"/>
    <property type="evidence" value="ECO:0000250"/>
    <property type="project" value="UniProtKB"/>
</dbReference>
<dbReference type="GO" id="GO:0003994">
    <property type="term" value="F:aconitate hydratase activity"/>
    <property type="evidence" value="ECO:0000250"/>
    <property type="project" value="UniProtKB"/>
</dbReference>
<dbReference type="GO" id="GO:0046872">
    <property type="term" value="F:metal ion binding"/>
    <property type="evidence" value="ECO:0007669"/>
    <property type="project" value="UniProtKB-KW"/>
</dbReference>
<dbReference type="GO" id="GO:0003730">
    <property type="term" value="F:mRNA 3'-UTR binding"/>
    <property type="evidence" value="ECO:0000250"/>
    <property type="project" value="UniProtKB"/>
</dbReference>
<dbReference type="GO" id="GO:0003729">
    <property type="term" value="F:mRNA binding"/>
    <property type="evidence" value="ECO:0000250"/>
    <property type="project" value="UniProtKB"/>
</dbReference>
<dbReference type="GO" id="GO:0019679">
    <property type="term" value="P:propionate metabolic process, methylcitrate cycle"/>
    <property type="evidence" value="ECO:0000250"/>
    <property type="project" value="UniProtKB"/>
</dbReference>
<dbReference type="GO" id="GO:0006099">
    <property type="term" value="P:tricarboxylic acid cycle"/>
    <property type="evidence" value="ECO:0000250"/>
    <property type="project" value="UniProtKB"/>
</dbReference>
<dbReference type="CDD" id="cd01586">
    <property type="entry name" value="AcnA_IRP"/>
    <property type="match status" value="1"/>
</dbReference>
<dbReference type="CDD" id="cd01580">
    <property type="entry name" value="AcnA_IRP_Swivel"/>
    <property type="match status" value="1"/>
</dbReference>
<dbReference type="FunFam" id="3.20.19.10:FF:000001">
    <property type="entry name" value="Aconitate hydratase"/>
    <property type="match status" value="1"/>
</dbReference>
<dbReference type="FunFam" id="3.30.499.10:FF:000002">
    <property type="entry name" value="Aconitate hydratase"/>
    <property type="match status" value="1"/>
</dbReference>
<dbReference type="FunFam" id="3.30.499.10:FF:000005">
    <property type="entry name" value="cytoplasmic aconitate hydratase"/>
    <property type="match status" value="1"/>
</dbReference>
<dbReference type="Gene3D" id="6.10.190.10">
    <property type="match status" value="1"/>
</dbReference>
<dbReference type="Gene3D" id="3.30.499.10">
    <property type="entry name" value="Aconitase, domain 3"/>
    <property type="match status" value="2"/>
</dbReference>
<dbReference type="Gene3D" id="3.20.19.10">
    <property type="entry name" value="Aconitase, domain 4"/>
    <property type="match status" value="1"/>
</dbReference>
<dbReference type="InterPro" id="IPR044137">
    <property type="entry name" value="AcnA_IRP_Swivel"/>
</dbReference>
<dbReference type="InterPro" id="IPR015931">
    <property type="entry name" value="Acnase/IPM_dHydase_lsu_aba_1/3"/>
</dbReference>
<dbReference type="InterPro" id="IPR001030">
    <property type="entry name" value="Acoase/IPM_deHydtase_lsu_aba"/>
</dbReference>
<dbReference type="InterPro" id="IPR015928">
    <property type="entry name" value="Aconitase/3IPM_dehydase_swvl"/>
</dbReference>
<dbReference type="InterPro" id="IPR006249">
    <property type="entry name" value="Aconitase/IRP2"/>
</dbReference>
<dbReference type="InterPro" id="IPR018136">
    <property type="entry name" value="Aconitase_4Fe-4S_BS"/>
</dbReference>
<dbReference type="InterPro" id="IPR036008">
    <property type="entry name" value="Aconitase_4Fe-4S_dom"/>
</dbReference>
<dbReference type="InterPro" id="IPR000573">
    <property type="entry name" value="AconitaseA/IPMdHydase_ssu_swvl"/>
</dbReference>
<dbReference type="NCBIfam" id="TIGR01341">
    <property type="entry name" value="aconitase_1"/>
    <property type="match status" value="1"/>
</dbReference>
<dbReference type="NCBIfam" id="NF006757">
    <property type="entry name" value="PRK09277.1"/>
    <property type="match status" value="1"/>
</dbReference>
<dbReference type="NCBIfam" id="NF009520">
    <property type="entry name" value="PRK12881.1"/>
    <property type="match status" value="1"/>
</dbReference>
<dbReference type="PANTHER" id="PTHR11670">
    <property type="entry name" value="ACONITASE/IRON-RESPONSIVE ELEMENT FAMILY MEMBER"/>
    <property type="match status" value="1"/>
</dbReference>
<dbReference type="Pfam" id="PF00330">
    <property type="entry name" value="Aconitase"/>
    <property type="match status" value="1"/>
</dbReference>
<dbReference type="Pfam" id="PF00694">
    <property type="entry name" value="Aconitase_C"/>
    <property type="match status" value="1"/>
</dbReference>
<dbReference type="PRINTS" id="PR00415">
    <property type="entry name" value="ACONITASE"/>
</dbReference>
<dbReference type="SUPFAM" id="SSF53732">
    <property type="entry name" value="Aconitase iron-sulfur domain"/>
    <property type="match status" value="1"/>
</dbReference>
<dbReference type="SUPFAM" id="SSF52016">
    <property type="entry name" value="LeuD/IlvD-like"/>
    <property type="match status" value="1"/>
</dbReference>
<dbReference type="PROSITE" id="PS00450">
    <property type="entry name" value="ACONITASE_1"/>
    <property type="match status" value="1"/>
</dbReference>
<dbReference type="PROSITE" id="PS01244">
    <property type="entry name" value="ACONITASE_2"/>
    <property type="match status" value="1"/>
</dbReference>
<organism>
    <name type="scientific">Staphylococcus epidermidis (strain ATCC 12228 / FDA PCI 1200)</name>
    <dbReference type="NCBI Taxonomy" id="176280"/>
    <lineage>
        <taxon>Bacteria</taxon>
        <taxon>Bacillati</taxon>
        <taxon>Bacillota</taxon>
        <taxon>Bacilli</taxon>
        <taxon>Bacillales</taxon>
        <taxon>Staphylococcaceae</taxon>
        <taxon>Staphylococcus</taxon>
    </lineage>
</organism>
<sequence length="901" mass="99287">MASNIKEQAKKQFELNGQSYTYYDLQTLEEKGLAKISKLPYSIRVLLESVLRQEDDFVITDDHIKALSKFGNAGNEGEVPFKPSRVILQDFTGVPAVVDLASLRKAMNDVGGDINKINPEVPVDLVIDHSVQVDSYANPEALERNMKLEFERNYERYQFLNWATKAFDNYNAVPPATGIVHQVNLEYLANVVHVRDVDGEKTAFPDTLVGTDSHTTMINGIGVLGWGVGGIEAEAGMLGQPSYFPIPEVIGVRLTHSLPQGSTATDLALRVTEELRKKGVVGKFVEFFGPGVQHLPLADRATIANMAPEYGATCGFFPVDEESLKYMKLTGRDEEHIELVKEYLQQNHMFFDVEKEDPEYTDVIDLDLSTVEASLSGPKRPQDLIFLSDMKKEFEKSVTAPAGNQGHGLDQSEFDKKAEINFNDGSKATMKTGDIAIAAITSCTNTSNPYVMLGAGLVAKKAVEKGLKVPEFVKTSLAPGSKVVTGYLRDSGLQQYLDDLGFNLVGYGCTTCIGNSGPLLPEIEKAVADEDLLVTSVLSGNRNFEGRIHPLVKANYLASPQLVVAYALAGTVDIDLQNEPIGKGKDGKDVYLQDIWPSIQEVSDTVDKVVTPELFLEEYKNVYHNNEMWNEIDVTDEPLYDFDPNSTYIQNPTFFQGLSKEPGKIEPLKSLRVMGKFGDSVTTDHISPAGAIGKDTPAGKYLLDHDVAIRNFNSYGSRRGNHEVMVRGTFANIRIKNQLAPGTEGGFTTYWPTGEIMPIYDAAMKYKEDGTGLVVLAGNDYGMGSSRDWAAKGTNLLGVKTVIAQSYERIHRSNLVMMGVLPLQFQQGESAEALGLDGKEEISVDINEDVQPHDLVNVTAKKENGEIINFKAIVRFDSLVELDYYRHGGILQMVLRNKLAQ</sequence>
<comment type="function">
    <text evidence="1 3">Involved in the catabolism of short chain fatty acids (SCFA) via the tricarboxylic acid (TCA)(acetyl degradation route) and probably the 2-methylcitrate cycle I (propionate degradation route). Catalyzes the reversible isomerization of citrate to isocitrate via cis-aconitate. Could catalyze the hydration of 2-methyl-cis-aconitate to yield (2R,3S)-2-methylisocitrate. The apo form of AcnA functions as a RNA-binding regulatory protein.</text>
</comment>
<comment type="catalytic activity">
    <reaction evidence="3">
        <text>citrate = D-threo-isocitrate</text>
        <dbReference type="Rhea" id="RHEA:10336"/>
        <dbReference type="ChEBI" id="CHEBI:15562"/>
        <dbReference type="ChEBI" id="CHEBI:16947"/>
        <dbReference type="EC" id="4.2.1.3"/>
    </reaction>
</comment>
<comment type="catalytic activity">
    <reaction evidence="3">
        <text>(2S,3R)-3-hydroxybutane-1,2,3-tricarboxylate = 2-methyl-cis-aconitate + H2O</text>
        <dbReference type="Rhea" id="RHEA:17941"/>
        <dbReference type="ChEBI" id="CHEBI:15377"/>
        <dbReference type="ChEBI" id="CHEBI:57429"/>
        <dbReference type="ChEBI" id="CHEBI:57872"/>
        <dbReference type="EC" id="4.2.1.99"/>
    </reaction>
</comment>
<comment type="cofactor">
    <cofactor evidence="1">
        <name>[4Fe-4S] cluster</name>
        <dbReference type="ChEBI" id="CHEBI:49883"/>
    </cofactor>
    <text evidence="1">Binds 1 [4Fe-4S] cluster per subunit.</text>
</comment>
<comment type="pathway">
    <text evidence="3">Carbohydrate metabolism; tricarboxylic acid cycle; isocitrate from oxaloacetate: step 2/2.</text>
</comment>
<comment type="pathway">
    <text evidence="3">Organic acid metabolism; propanoate degradation.</text>
</comment>
<comment type="subunit">
    <text evidence="1">Monomer.</text>
</comment>
<comment type="similarity">
    <text evidence="4">Belongs to the aconitase/IPM isomerase family.</text>
</comment>
<reference key="1">
    <citation type="journal article" date="2003" name="Mol. Microbiol.">
        <title>Genome-based analysis of virulence genes in a non-biofilm-forming Staphylococcus epidermidis strain (ATCC 12228).</title>
        <authorList>
            <person name="Zhang Y.-Q."/>
            <person name="Ren S.-X."/>
            <person name="Li H.-L."/>
            <person name="Wang Y.-X."/>
            <person name="Fu G."/>
            <person name="Yang J."/>
            <person name="Qin Z.-Q."/>
            <person name="Miao Y.-G."/>
            <person name="Wang W.-Y."/>
            <person name="Chen R.-S."/>
            <person name="Shen Y."/>
            <person name="Chen Z."/>
            <person name="Yuan Z.-H."/>
            <person name="Zhao G.-P."/>
            <person name="Qu D."/>
            <person name="Danchin A."/>
            <person name="Wen Y.-M."/>
        </authorList>
    </citation>
    <scope>NUCLEOTIDE SEQUENCE [LARGE SCALE GENOMIC DNA]</scope>
    <source>
        <strain>ATCC 12228 / FDA PCI 1200</strain>
    </source>
</reference>
<feature type="chain" id="PRO_0000076672" description="Aconitate hydratase A">
    <location>
        <begin position="1"/>
        <end position="901"/>
    </location>
</feature>
<feature type="binding site" evidence="2">
    <location>
        <position position="443"/>
    </location>
    <ligand>
        <name>[4Fe-4S] cluster</name>
        <dbReference type="ChEBI" id="CHEBI:49883"/>
    </ligand>
</feature>
<feature type="binding site" evidence="2">
    <location>
        <position position="509"/>
    </location>
    <ligand>
        <name>[4Fe-4S] cluster</name>
        <dbReference type="ChEBI" id="CHEBI:49883"/>
    </ligand>
</feature>
<feature type="binding site" evidence="2">
    <location>
        <position position="512"/>
    </location>
    <ligand>
        <name>[4Fe-4S] cluster</name>
        <dbReference type="ChEBI" id="CHEBI:49883"/>
    </ligand>
</feature>
<proteinExistence type="inferred from homology"/>
<evidence type="ECO:0000250" key="1">
    <source>
        <dbReference type="UniProtKB" id="P09339"/>
    </source>
</evidence>
<evidence type="ECO:0000250" key="2">
    <source>
        <dbReference type="UniProtKB" id="P36683"/>
    </source>
</evidence>
<evidence type="ECO:0000250" key="3">
    <source>
        <dbReference type="UniProtKB" id="Q8ZP52"/>
    </source>
</evidence>
<evidence type="ECO:0000305" key="4"/>
<accession>Q8CPC2</accession>